<dbReference type="EMBL" id="AM743169">
    <property type="protein sequence ID" value="CAQ47440.1"/>
    <property type="molecule type" value="Genomic_DNA"/>
</dbReference>
<dbReference type="RefSeq" id="WP_005411067.1">
    <property type="nucleotide sequence ID" value="NC_010943.1"/>
</dbReference>
<dbReference type="SMR" id="B2FUT0"/>
<dbReference type="EnsemblBacteria" id="CAQ47440">
    <property type="protein sequence ID" value="CAQ47440"/>
    <property type="gene ID" value="Smlt4048"/>
</dbReference>
<dbReference type="KEGG" id="sml:Smlt4048"/>
<dbReference type="eggNOG" id="COG2921">
    <property type="taxonomic scope" value="Bacteria"/>
</dbReference>
<dbReference type="HOGENOM" id="CLU_161438_1_1_6"/>
<dbReference type="Proteomes" id="UP000008840">
    <property type="component" value="Chromosome"/>
</dbReference>
<dbReference type="Gene3D" id="3.30.70.260">
    <property type="match status" value="1"/>
</dbReference>
<dbReference type="HAMAP" id="MF_00659">
    <property type="entry name" value="UPF0250"/>
    <property type="match status" value="1"/>
</dbReference>
<dbReference type="InterPro" id="IPR007454">
    <property type="entry name" value="UPF0250_YbeD-like"/>
</dbReference>
<dbReference type="InterPro" id="IPR027471">
    <property type="entry name" value="YbeD-like_sf"/>
</dbReference>
<dbReference type="NCBIfam" id="NF002066">
    <property type="entry name" value="PRK00907.1"/>
    <property type="match status" value="1"/>
</dbReference>
<dbReference type="Pfam" id="PF04359">
    <property type="entry name" value="DUF493"/>
    <property type="match status" value="1"/>
</dbReference>
<dbReference type="SUPFAM" id="SSF117991">
    <property type="entry name" value="YbeD/HP0495-like"/>
    <property type="match status" value="1"/>
</dbReference>
<keyword id="KW-1185">Reference proteome</keyword>
<gene>
    <name type="ordered locus">Smlt4048</name>
</gene>
<name>Y4048_STRMK</name>
<protein>
    <recommendedName>
        <fullName evidence="1">UPF0250 protein Smlt4048</fullName>
    </recommendedName>
</protein>
<accession>B2FUT0</accession>
<organism>
    <name type="scientific">Stenotrophomonas maltophilia (strain K279a)</name>
    <dbReference type="NCBI Taxonomy" id="522373"/>
    <lineage>
        <taxon>Bacteria</taxon>
        <taxon>Pseudomonadati</taxon>
        <taxon>Pseudomonadota</taxon>
        <taxon>Gammaproteobacteria</taxon>
        <taxon>Lysobacterales</taxon>
        <taxon>Lysobacteraceae</taxon>
        <taxon>Stenotrophomonas</taxon>
        <taxon>Stenotrophomonas maltophilia group</taxon>
    </lineage>
</organism>
<evidence type="ECO:0000255" key="1">
    <source>
        <dbReference type="HAMAP-Rule" id="MF_00659"/>
    </source>
</evidence>
<proteinExistence type="inferred from homology"/>
<comment type="similarity">
    <text evidence="1">Belongs to the UPF0250 family.</text>
</comment>
<reference key="1">
    <citation type="journal article" date="2008" name="Genome Biol.">
        <title>The complete genome, comparative and functional analysis of Stenotrophomonas maltophilia reveals an organism heavily shielded by drug resistance determinants.</title>
        <authorList>
            <person name="Crossman L.C."/>
            <person name="Gould V.C."/>
            <person name="Dow J.M."/>
            <person name="Vernikos G.S."/>
            <person name="Okazaki A."/>
            <person name="Sebaihia M."/>
            <person name="Saunders D."/>
            <person name="Arrowsmith C."/>
            <person name="Carver T."/>
            <person name="Peters N."/>
            <person name="Adlem E."/>
            <person name="Kerhornou A."/>
            <person name="Lord A."/>
            <person name="Murphy L."/>
            <person name="Seeger K."/>
            <person name="Squares R."/>
            <person name="Rutter S."/>
            <person name="Quail M.A."/>
            <person name="Rajandream M.A."/>
            <person name="Harris D."/>
            <person name="Churcher C."/>
            <person name="Bentley S.D."/>
            <person name="Parkhill J."/>
            <person name="Thomson N.R."/>
            <person name="Avison M.B."/>
        </authorList>
    </citation>
    <scope>NUCLEOTIDE SEQUENCE [LARGE SCALE GENOMIC DNA]</scope>
    <source>
        <strain>K279a</strain>
    </source>
</reference>
<sequence length="92" mass="10511">MEIKSDNPDHGFQFPGQFELSAMGPANRGLEHELPRLLLAAGIDVVNERISWKHSSNGKYVSVRIVFKAESREQYDLAHQALRDHPEVKWTL</sequence>
<feature type="chain" id="PRO_1000131264" description="UPF0250 protein Smlt4048">
    <location>
        <begin position="1"/>
        <end position="92"/>
    </location>
</feature>